<keyword id="KW-0500">Molybdenum</keyword>
<keyword id="KW-0535">Nitrogen fixation</keyword>
<comment type="function">
    <text>Probably involved in molybdenum processing.</text>
</comment>
<comment type="similarity">
    <text evidence="1">Belongs to the NifQ family.</text>
</comment>
<name>NIFQ_AZOVI</name>
<protein>
    <recommendedName>
        <fullName>Protein NifQ</fullName>
    </recommendedName>
</protein>
<evidence type="ECO:0000305" key="1"/>
<reference key="1">
    <citation type="journal article" date="1988" name="J. Bacteriol.">
        <title>Nucleotide sequence and genetic analysis of the nifB-nifQ region from Azotobacter vinelandii.</title>
        <authorList>
            <person name="Joerger R.D."/>
            <person name="Bishop P.E."/>
        </authorList>
    </citation>
    <scope>NUCLEOTIDE SEQUENCE [GENOMIC DNA]</scope>
</reference>
<accession>P11068</accession>
<gene>
    <name type="primary">nifQ</name>
</gene>
<proteinExistence type="inferred from homology"/>
<feature type="chain" id="PRO_0000096820" description="Protein NifQ">
    <location>
        <begin position="1"/>
        <end position="195"/>
    </location>
</feature>
<sequence>MGSAAAHRGDTTQAVRHDRANHLWLERIVRSQRDGLSCLPFHLGLDERSYAELIRTHFPELAGQTSASLGSLAHECSELREDLLEMRRDEWEELRVLLLDGRRGDDPEELWMASIVAAACLGGDHLWRDLGLESRETLRVLLMHNFPHLAERNVKNMRWKKFFYKQLCEQDGGYVCRSPSCEQCPSHHDCFGAEI</sequence>
<dbReference type="EMBL" id="J03411">
    <property type="protein sequence ID" value="AAA22151.1"/>
    <property type="molecule type" value="Genomic_DNA"/>
</dbReference>
<dbReference type="PIR" id="E27733">
    <property type="entry name" value="E27733"/>
</dbReference>
<dbReference type="RefSeq" id="WP_012703544.1">
    <property type="nucleotide sequence ID" value="NZ_FPKM01000015.1"/>
</dbReference>
<dbReference type="OMA" id="KFFYRQR"/>
<dbReference type="BioCyc" id="MetaCyc:MONOMER-19488"/>
<dbReference type="GO" id="GO:0030151">
    <property type="term" value="F:molybdenum ion binding"/>
    <property type="evidence" value="ECO:0007669"/>
    <property type="project" value="InterPro"/>
</dbReference>
<dbReference type="GO" id="GO:0009399">
    <property type="term" value="P:nitrogen fixation"/>
    <property type="evidence" value="ECO:0007669"/>
    <property type="project" value="UniProtKB-KW"/>
</dbReference>
<dbReference type="InterPro" id="IPR006975">
    <property type="entry name" value="NifQ"/>
</dbReference>
<dbReference type="Pfam" id="PF04891">
    <property type="entry name" value="NifQ"/>
    <property type="match status" value="1"/>
</dbReference>
<organism>
    <name type="scientific">Azotobacter vinelandii</name>
    <dbReference type="NCBI Taxonomy" id="354"/>
    <lineage>
        <taxon>Bacteria</taxon>
        <taxon>Pseudomonadati</taxon>
        <taxon>Pseudomonadota</taxon>
        <taxon>Gammaproteobacteria</taxon>
        <taxon>Pseudomonadales</taxon>
        <taxon>Pseudomonadaceae</taxon>
        <taxon>Azotobacter</taxon>
    </lineage>
</organism>